<name>MIAA_CHRVO</name>
<reference key="1">
    <citation type="journal article" date="2003" name="Proc. Natl. Acad. Sci. U.S.A.">
        <title>The complete genome sequence of Chromobacterium violaceum reveals remarkable and exploitable bacterial adaptability.</title>
        <authorList>
            <person name="Vasconcelos A.T.R."/>
            <person name="de Almeida D.F."/>
            <person name="Hungria M."/>
            <person name="Guimaraes C.T."/>
            <person name="Antonio R.V."/>
            <person name="Almeida F.C."/>
            <person name="de Almeida L.G.P."/>
            <person name="de Almeida R."/>
            <person name="Alves-Gomes J.A."/>
            <person name="Andrade E.M."/>
            <person name="Araripe J."/>
            <person name="de Araujo M.F.F."/>
            <person name="Astolfi-Filho S."/>
            <person name="Azevedo V."/>
            <person name="Baptista A.J."/>
            <person name="Bataus L.A.M."/>
            <person name="Batista J.S."/>
            <person name="Belo A."/>
            <person name="van den Berg C."/>
            <person name="Bogo M."/>
            <person name="Bonatto S."/>
            <person name="Bordignon J."/>
            <person name="Brigido M.M."/>
            <person name="Brito C.A."/>
            <person name="Brocchi M."/>
            <person name="Burity H.A."/>
            <person name="Camargo A.A."/>
            <person name="Cardoso D.D.P."/>
            <person name="Carneiro N.P."/>
            <person name="Carraro D.M."/>
            <person name="Carvalho C.M.B."/>
            <person name="Cascardo J.C.M."/>
            <person name="Cavada B.S."/>
            <person name="Chueire L.M.O."/>
            <person name="Creczynski-Pasa T.B."/>
            <person name="Cunha-Junior N.C."/>
            <person name="Fagundes N."/>
            <person name="Falcao C.L."/>
            <person name="Fantinatti F."/>
            <person name="Farias I.P."/>
            <person name="Felipe M.S.S."/>
            <person name="Ferrari L.P."/>
            <person name="Ferro J.A."/>
            <person name="Ferro M.I.T."/>
            <person name="Franco G.R."/>
            <person name="Freitas N.S.A."/>
            <person name="Furlan L.R."/>
            <person name="Gazzinelli R.T."/>
            <person name="Gomes E.A."/>
            <person name="Goncalves P.R."/>
            <person name="Grangeiro T.B."/>
            <person name="Grattapaglia D."/>
            <person name="Grisard E.C."/>
            <person name="Hanna E.S."/>
            <person name="Jardim S.N."/>
            <person name="Laurino J."/>
            <person name="Leoi L.C.T."/>
            <person name="Lima L.F.A."/>
            <person name="Loureiro M.F."/>
            <person name="Lyra M.C.C.P."/>
            <person name="Madeira H.M.F."/>
            <person name="Manfio G.P."/>
            <person name="Maranhao A.Q."/>
            <person name="Martins W.S."/>
            <person name="di Mauro S.M.Z."/>
            <person name="de Medeiros S.R.B."/>
            <person name="Meissner R.V."/>
            <person name="Moreira M.A.M."/>
            <person name="Nascimento F.F."/>
            <person name="Nicolas M.F."/>
            <person name="Oliveira J.G."/>
            <person name="Oliveira S.C."/>
            <person name="Paixao R.F.C."/>
            <person name="Parente J.A."/>
            <person name="Pedrosa F.O."/>
            <person name="Pena S.D.J."/>
            <person name="Pereira J.O."/>
            <person name="Pereira M."/>
            <person name="Pinto L.S.R.C."/>
            <person name="Pinto L.S."/>
            <person name="Porto J.I.R."/>
            <person name="Potrich D.P."/>
            <person name="Ramalho-Neto C.E."/>
            <person name="Reis A.M.M."/>
            <person name="Rigo L.U."/>
            <person name="Rondinelli E."/>
            <person name="Santos E.B.P."/>
            <person name="Santos F.R."/>
            <person name="Schneider M.P.C."/>
            <person name="Seuanez H.N."/>
            <person name="Silva A.M.R."/>
            <person name="da Silva A.L.C."/>
            <person name="Silva D.W."/>
            <person name="Silva R."/>
            <person name="Simoes I.C."/>
            <person name="Simon D."/>
            <person name="Soares C.M.A."/>
            <person name="Soares R.B.A."/>
            <person name="Souza E.M."/>
            <person name="Souza K.R.L."/>
            <person name="Souza R.C."/>
            <person name="Steffens M.B.R."/>
            <person name="Steindel M."/>
            <person name="Teixeira S.R."/>
            <person name="Urmenyi T."/>
            <person name="Vettore A."/>
            <person name="Wassem R."/>
            <person name="Zaha A."/>
            <person name="Simpson A.J.G."/>
        </authorList>
    </citation>
    <scope>NUCLEOTIDE SEQUENCE [LARGE SCALE GENOMIC DNA]</scope>
    <source>
        <strain>ATCC 12472 / DSM 30191 / JCM 1249 / CCUG 213 / NBRC 12614 / NCIMB 9131 / NCTC 9757 / MK</strain>
    </source>
</reference>
<comment type="function">
    <text evidence="1">Catalyzes the transfer of a dimethylallyl group onto the adenine at position 37 in tRNAs that read codons beginning with uridine, leading to the formation of N6-(dimethylallyl)adenosine (i(6)A).</text>
</comment>
<comment type="catalytic activity">
    <reaction evidence="1">
        <text>adenosine(37) in tRNA + dimethylallyl diphosphate = N(6)-dimethylallyladenosine(37) in tRNA + diphosphate</text>
        <dbReference type="Rhea" id="RHEA:26482"/>
        <dbReference type="Rhea" id="RHEA-COMP:10162"/>
        <dbReference type="Rhea" id="RHEA-COMP:10375"/>
        <dbReference type="ChEBI" id="CHEBI:33019"/>
        <dbReference type="ChEBI" id="CHEBI:57623"/>
        <dbReference type="ChEBI" id="CHEBI:74411"/>
        <dbReference type="ChEBI" id="CHEBI:74415"/>
        <dbReference type="EC" id="2.5.1.75"/>
    </reaction>
</comment>
<comment type="cofactor">
    <cofactor evidence="1">
        <name>Mg(2+)</name>
        <dbReference type="ChEBI" id="CHEBI:18420"/>
    </cofactor>
</comment>
<comment type="subunit">
    <text evidence="1">Monomer.</text>
</comment>
<comment type="similarity">
    <text evidence="1">Belongs to the IPP transferase family.</text>
</comment>
<protein>
    <recommendedName>
        <fullName evidence="1">tRNA dimethylallyltransferase</fullName>
        <ecNumber evidence="1">2.5.1.75</ecNumber>
    </recommendedName>
    <alternativeName>
        <fullName evidence="1">Dimethylallyl diphosphate:tRNA dimethylallyltransferase</fullName>
        <shortName evidence="1">DMAPP:tRNA dimethylallyltransferase</shortName>
        <shortName evidence="1">DMATase</shortName>
    </alternativeName>
    <alternativeName>
        <fullName evidence="1">Isopentenyl-diphosphate:tRNA isopentenyltransferase</fullName>
        <shortName evidence="1">IPP transferase</shortName>
        <shortName evidence="1">IPPT</shortName>
        <shortName evidence="1">IPTase</shortName>
    </alternativeName>
</protein>
<dbReference type="EC" id="2.5.1.75" evidence="1"/>
<dbReference type="EMBL" id="AE016825">
    <property type="protein sequence ID" value="AAQ61053.1"/>
    <property type="molecule type" value="Genomic_DNA"/>
</dbReference>
<dbReference type="RefSeq" id="WP_011136936.1">
    <property type="nucleotide sequence ID" value="NC_005085.1"/>
</dbReference>
<dbReference type="SMR" id="Q7MBE2"/>
<dbReference type="STRING" id="243365.CV_3389"/>
<dbReference type="KEGG" id="cvi:CV_3389"/>
<dbReference type="eggNOG" id="COG0324">
    <property type="taxonomic scope" value="Bacteria"/>
</dbReference>
<dbReference type="HOGENOM" id="CLU_032616_0_0_4"/>
<dbReference type="OrthoDB" id="9776390at2"/>
<dbReference type="Proteomes" id="UP000001424">
    <property type="component" value="Chromosome"/>
</dbReference>
<dbReference type="GO" id="GO:0005524">
    <property type="term" value="F:ATP binding"/>
    <property type="evidence" value="ECO:0007669"/>
    <property type="project" value="UniProtKB-UniRule"/>
</dbReference>
<dbReference type="GO" id="GO:0052381">
    <property type="term" value="F:tRNA dimethylallyltransferase activity"/>
    <property type="evidence" value="ECO:0007669"/>
    <property type="project" value="UniProtKB-UniRule"/>
</dbReference>
<dbReference type="GO" id="GO:0006400">
    <property type="term" value="P:tRNA modification"/>
    <property type="evidence" value="ECO:0007669"/>
    <property type="project" value="TreeGrafter"/>
</dbReference>
<dbReference type="FunFam" id="1.10.20.140:FF:000001">
    <property type="entry name" value="tRNA dimethylallyltransferase"/>
    <property type="match status" value="1"/>
</dbReference>
<dbReference type="Gene3D" id="1.10.20.140">
    <property type="match status" value="1"/>
</dbReference>
<dbReference type="Gene3D" id="3.40.50.300">
    <property type="entry name" value="P-loop containing nucleotide triphosphate hydrolases"/>
    <property type="match status" value="1"/>
</dbReference>
<dbReference type="HAMAP" id="MF_00185">
    <property type="entry name" value="IPP_trans"/>
    <property type="match status" value="1"/>
</dbReference>
<dbReference type="InterPro" id="IPR039657">
    <property type="entry name" value="Dimethylallyltransferase"/>
</dbReference>
<dbReference type="InterPro" id="IPR018022">
    <property type="entry name" value="IPT"/>
</dbReference>
<dbReference type="InterPro" id="IPR027417">
    <property type="entry name" value="P-loop_NTPase"/>
</dbReference>
<dbReference type="NCBIfam" id="TIGR00174">
    <property type="entry name" value="miaA"/>
    <property type="match status" value="1"/>
</dbReference>
<dbReference type="PANTHER" id="PTHR11088">
    <property type="entry name" value="TRNA DIMETHYLALLYLTRANSFERASE"/>
    <property type="match status" value="1"/>
</dbReference>
<dbReference type="PANTHER" id="PTHR11088:SF60">
    <property type="entry name" value="TRNA DIMETHYLALLYLTRANSFERASE"/>
    <property type="match status" value="1"/>
</dbReference>
<dbReference type="Pfam" id="PF01715">
    <property type="entry name" value="IPPT"/>
    <property type="match status" value="1"/>
</dbReference>
<dbReference type="SUPFAM" id="SSF52540">
    <property type="entry name" value="P-loop containing nucleoside triphosphate hydrolases"/>
    <property type="match status" value="1"/>
</dbReference>
<organism>
    <name type="scientific">Chromobacterium violaceum (strain ATCC 12472 / DSM 30191 / JCM 1249 / CCUG 213 / NBRC 12614 / NCIMB 9131 / NCTC 9757 / MK)</name>
    <dbReference type="NCBI Taxonomy" id="243365"/>
    <lineage>
        <taxon>Bacteria</taxon>
        <taxon>Pseudomonadati</taxon>
        <taxon>Pseudomonadota</taxon>
        <taxon>Betaproteobacteria</taxon>
        <taxon>Neisseriales</taxon>
        <taxon>Chromobacteriaceae</taxon>
        <taxon>Chromobacterium</taxon>
    </lineage>
</organism>
<proteinExistence type="inferred from homology"/>
<keyword id="KW-0067">ATP-binding</keyword>
<keyword id="KW-0460">Magnesium</keyword>
<keyword id="KW-0547">Nucleotide-binding</keyword>
<keyword id="KW-1185">Reference proteome</keyword>
<keyword id="KW-0808">Transferase</keyword>
<keyword id="KW-0819">tRNA processing</keyword>
<accession>Q7MBE2</accession>
<evidence type="ECO:0000255" key="1">
    <source>
        <dbReference type="HAMAP-Rule" id="MF_00185"/>
    </source>
</evidence>
<gene>
    <name evidence="1" type="primary">miaA</name>
    <name type="ordered locus">CV_3389</name>
</gene>
<sequence>MSDTPQAILLMGPTASGKTGLALELARRFPVEIVSVDSALVYRDMDIGTAKPTAEEMAACPHHLIDVISPLQSYSAAQFHADANRLIADIQARGKLPLLVGGTMLYYKALLEGLSDLPQADAALRAELDADAALLGWPAMHARLAELDPATASRLNPNDSQRIHRALEVCLLSGKPMSELIAQGKEAAAGFRFLPLALVPRERGWLHARIAERFRIMLEQGFLDEVSRLRAKYPELTLNLPSMRCVGYRQAWEHQDGLYGHDEFVERGVAATRQLAKRQLTWTRSLDAIPVDAQRDGLAGLLGDAVDDFLAGRPPAESLRYAGDF</sequence>
<feature type="chain" id="PRO_0000163902" description="tRNA dimethylallyltransferase">
    <location>
        <begin position="1"/>
        <end position="325"/>
    </location>
</feature>
<feature type="region of interest" description="Interaction with substrate tRNA" evidence="1">
    <location>
        <begin position="37"/>
        <end position="40"/>
    </location>
</feature>
<feature type="region of interest" description="Interaction with substrate tRNA" evidence="1">
    <location>
        <begin position="161"/>
        <end position="165"/>
    </location>
</feature>
<feature type="region of interest" description="Interaction with substrate tRNA" evidence="1">
    <location>
        <begin position="244"/>
        <end position="249"/>
    </location>
</feature>
<feature type="binding site" evidence="1">
    <location>
        <begin position="12"/>
        <end position="19"/>
    </location>
    <ligand>
        <name>ATP</name>
        <dbReference type="ChEBI" id="CHEBI:30616"/>
    </ligand>
</feature>
<feature type="binding site" evidence="1">
    <location>
        <begin position="14"/>
        <end position="19"/>
    </location>
    <ligand>
        <name>substrate</name>
    </ligand>
</feature>
<feature type="site" description="Interaction with substrate tRNA" evidence="1">
    <location>
        <position position="103"/>
    </location>
</feature>
<feature type="site" description="Interaction with substrate tRNA" evidence="1">
    <location>
        <position position="125"/>
    </location>
</feature>